<comment type="subcellular location">
    <subcellularLocation>
        <location evidence="1">Cytoplasm</location>
    </subcellularLocation>
</comment>
<comment type="similarity">
    <text evidence="1">Belongs to the UPF0298 family.</text>
</comment>
<protein>
    <recommendedName>
        <fullName evidence="1">UPF0298 protein MGAS9429_Spy0329</fullName>
    </recommendedName>
</protein>
<organism>
    <name type="scientific">Streptococcus pyogenes serotype M12 (strain MGAS9429)</name>
    <dbReference type="NCBI Taxonomy" id="370551"/>
    <lineage>
        <taxon>Bacteria</taxon>
        <taxon>Bacillati</taxon>
        <taxon>Bacillota</taxon>
        <taxon>Bacilli</taxon>
        <taxon>Lactobacillales</taxon>
        <taxon>Streptococcaceae</taxon>
        <taxon>Streptococcus</taxon>
    </lineage>
</organism>
<keyword id="KW-0963">Cytoplasm</keyword>
<feature type="chain" id="PRO_1000065369" description="UPF0298 protein MGAS9429_Spy0329">
    <location>
        <begin position="1"/>
        <end position="97"/>
    </location>
</feature>
<gene>
    <name type="ordered locus">MGAS9429_Spy0329</name>
</gene>
<evidence type="ECO:0000255" key="1">
    <source>
        <dbReference type="HAMAP-Rule" id="MF_01126"/>
    </source>
</evidence>
<proteinExistence type="inferred from homology"/>
<dbReference type="EMBL" id="CP000259">
    <property type="protein sequence ID" value="ABF31517.1"/>
    <property type="molecule type" value="Genomic_DNA"/>
</dbReference>
<dbReference type="RefSeq" id="WP_002990928.1">
    <property type="nucleotide sequence ID" value="NC_008021.1"/>
</dbReference>
<dbReference type="SMR" id="Q1JN82"/>
<dbReference type="KEGG" id="spk:MGAS9429_Spy0329"/>
<dbReference type="HOGENOM" id="CLU_159890_1_0_9"/>
<dbReference type="Proteomes" id="UP000002433">
    <property type="component" value="Chromosome"/>
</dbReference>
<dbReference type="GO" id="GO:0005737">
    <property type="term" value="C:cytoplasm"/>
    <property type="evidence" value="ECO:0007669"/>
    <property type="project" value="UniProtKB-SubCell"/>
</dbReference>
<dbReference type="HAMAP" id="MF_01126">
    <property type="entry name" value="UPF0298"/>
    <property type="match status" value="1"/>
</dbReference>
<dbReference type="InterPro" id="IPR016979">
    <property type="entry name" value="DUF2129"/>
</dbReference>
<dbReference type="NCBIfam" id="NF002631">
    <property type="entry name" value="PRK02302.1"/>
    <property type="match status" value="1"/>
</dbReference>
<dbReference type="Pfam" id="PF09902">
    <property type="entry name" value="DUF2129"/>
    <property type="match status" value="1"/>
</dbReference>
<dbReference type="PIRSF" id="PIRSF031653">
    <property type="entry name" value="UCP031653"/>
    <property type="match status" value="1"/>
</dbReference>
<sequence>MFQKQERIGLVVYLYYNRDARKLSKFGDLYYHSKRSRYLIIYINKNDLDTKLEEMRRLKCVKDIRPSAFDDIDRQFVGNLHRDETNNHQKGYQPPSY</sequence>
<accession>Q1JN82</accession>
<name>Y329_STRPC</name>
<reference key="1">
    <citation type="journal article" date="2006" name="Proc. Natl. Acad. Sci. U.S.A.">
        <title>Molecular genetic anatomy of inter- and intraserotype variation in the human bacterial pathogen group A Streptococcus.</title>
        <authorList>
            <person name="Beres S.B."/>
            <person name="Richter E.W."/>
            <person name="Nagiec M.J."/>
            <person name="Sumby P."/>
            <person name="Porcella S.F."/>
            <person name="DeLeo F.R."/>
            <person name="Musser J.M."/>
        </authorList>
    </citation>
    <scope>NUCLEOTIDE SEQUENCE [LARGE SCALE GENOMIC DNA]</scope>
    <source>
        <strain>MGAS9429</strain>
    </source>
</reference>